<evidence type="ECO:0000250" key="1">
    <source>
        <dbReference type="UniProtKB" id="Q9KN86"/>
    </source>
</evidence>
<evidence type="ECO:0000255" key="2"/>
<evidence type="ECO:0000269" key="3">
    <source>
    </source>
</evidence>
<evidence type="ECO:0000269" key="4">
    <source>
    </source>
</evidence>
<evidence type="ECO:0000303" key="5">
    <source>
    </source>
</evidence>
<evidence type="ECO:0000303" key="6">
    <source>
    </source>
</evidence>
<evidence type="ECO:0000305" key="7"/>
<evidence type="ECO:0000305" key="8">
    <source>
    </source>
</evidence>
<evidence type="ECO:0000312" key="9">
    <source>
        <dbReference type="EMBL" id="AAF93796.1"/>
    </source>
</evidence>
<evidence type="ECO:0000312" key="10">
    <source>
        <dbReference type="Proteomes" id="UP000000584"/>
    </source>
</evidence>
<gene>
    <name evidence="5 6" type="primary">shyC</name>
    <name evidence="5 9" type="ordered locus">VC_0630</name>
</gene>
<reference evidence="9 10" key="1">
    <citation type="journal article" date="2000" name="Nature">
        <title>DNA sequence of both chromosomes of the cholera pathogen Vibrio cholerae.</title>
        <authorList>
            <person name="Heidelberg J.F."/>
            <person name="Eisen J.A."/>
            <person name="Nelson W.C."/>
            <person name="Clayton R.A."/>
            <person name="Gwinn M.L."/>
            <person name="Dodson R.J."/>
            <person name="Haft D.H."/>
            <person name="Hickey E.K."/>
            <person name="Peterson J.D."/>
            <person name="Umayam L.A."/>
            <person name="Gill S.R."/>
            <person name="Nelson K.E."/>
            <person name="Read T.D."/>
            <person name="Tettelin H."/>
            <person name="Richardson D.L."/>
            <person name="Ermolaeva M.D."/>
            <person name="Vamathevan J.J."/>
            <person name="Bass S."/>
            <person name="Qin H."/>
            <person name="Dragoi I."/>
            <person name="Sellers P."/>
            <person name="McDonald L.A."/>
            <person name="Utterback T.R."/>
            <person name="Fleischmann R.D."/>
            <person name="Nierman W.C."/>
            <person name="White O."/>
            <person name="Salzberg S.L."/>
            <person name="Smith H.O."/>
            <person name="Colwell R.R."/>
            <person name="Mekalanos J.J."/>
            <person name="Venter J.C."/>
            <person name="Fraser C.M."/>
        </authorList>
    </citation>
    <scope>NUCLEOTIDE SEQUENCE [LARGE SCALE GENOMIC DNA]</scope>
    <source>
        <strain evidence="10">ATCC 39315 / El Tor Inaba N16961</strain>
    </source>
</reference>
<reference key="2">
    <citation type="journal article" date="2013" name="Mol. Microbiol.">
        <title>Substrate specificity of an elongation-specific peptidoglycan endopeptidase and its implications for cell wall architecture and growth of Vibrio cholerae.</title>
        <authorList>
            <person name="Doerr T."/>
            <person name="Cava F."/>
            <person name="Lam H."/>
            <person name="Davis B.M."/>
            <person name="Waldor M.K."/>
        </authorList>
    </citation>
    <scope>SUBCELLULAR LOCATION</scope>
    <scope>DISRUPTION PHENOTYPE</scope>
    <source>
        <strain evidence="5">ATCC 39315 / El Tor Inaba N16961</strain>
    </source>
</reference>
<reference key="3">
    <citation type="journal article" date="2019" name="MBio">
        <title>Endopeptidase Regulation as a Novel Function of the Zur-Dependent Zinc Starvation Response.</title>
        <authorList>
            <person name="Murphy S.G."/>
            <person name="Alvarez L."/>
            <person name="Adams M.C."/>
            <person name="Liu S."/>
            <person name="Chappie J.S."/>
            <person name="Cava F."/>
            <person name="Doerr T."/>
        </authorList>
    </citation>
    <scope>FUNCTION</scope>
    <scope>CATALYTIC ACTIVITY</scope>
    <scope>ACTIVITY REGULATION</scope>
    <scope>PATHWAY</scope>
    <scope>DISRUPTION PHENOTYPE</scope>
    <source>
        <strain evidence="6">ATCC 39315 / El Tor Inaba N16961</strain>
    </source>
</reference>
<name>SHYC_VIBCH</name>
<accession>Q9KU93</accession>
<protein>
    <recommendedName>
        <fullName evidence="6">Peptidoglycan DD-endopeptidase ShyC</fullName>
        <ecNumber evidence="4">3.4.24.-</ecNumber>
    </recommendedName>
    <alternativeName>
        <fullName evidence="6">Autolysin ShyC</fullName>
    </alternativeName>
    <alternativeName>
        <fullName evidence="5">Sidewall hydrolase C</fullName>
    </alternativeName>
</protein>
<proteinExistence type="evidence at protein level"/>
<organism evidence="9 10">
    <name type="scientific">Vibrio cholerae serotype O1 (strain ATCC 39315 / El Tor Inaba N16961)</name>
    <dbReference type="NCBI Taxonomy" id="243277"/>
    <lineage>
        <taxon>Bacteria</taxon>
        <taxon>Pseudomonadati</taxon>
        <taxon>Pseudomonadota</taxon>
        <taxon>Gammaproteobacteria</taxon>
        <taxon>Vibrionales</taxon>
        <taxon>Vibrionaceae</taxon>
        <taxon>Vibrio</taxon>
    </lineage>
</organism>
<keyword id="KW-0997">Cell inner membrane</keyword>
<keyword id="KW-1003">Cell membrane</keyword>
<keyword id="KW-0961">Cell wall biogenesis/degradation</keyword>
<keyword id="KW-0378">Hydrolase</keyword>
<keyword id="KW-0472">Membrane</keyword>
<keyword id="KW-0479">Metal-binding</keyword>
<keyword id="KW-0482">Metalloprotease</keyword>
<keyword id="KW-0645">Protease</keyword>
<keyword id="KW-1185">Reference proteome</keyword>
<keyword id="KW-0812">Transmembrane</keyword>
<keyword id="KW-1133">Transmembrane helix</keyword>
<keyword id="KW-0862">Zinc</keyword>
<sequence length="433" mass="48979">MLSLFNRLPWLHRVLITAFSAIIVFAIFFLPNSEDLRKPDAQREVGRHYPVTLDNQLVSTPEEEVIAPPSVMLRWETYQVANGESAALLFQRAGLSSRVLYELTSSNSDINNQLSKLMPKDELKFGFDKDNQLVQLKRTISPYETFVVTRSDSGFTSEFDKKEVTFQLNYAEAKITSNFWNAGVTAGLSANQIIELANMFGWDIDFALDIREGDQFKLLYQEKIVEGSVIGRGNIIAATFINQGSTFTAILDDNTGNYYDQNGRAMKKAFLRSPLDFRRVSSNFNPRRLHPVTGQIKAHRGTDYVAPVGTPIWAAGDGVVEKSSYNQFNGNYVYIRHSNTYITKYLHLQRRLVKTGERVKQGQTIGTLGGTGRVTGPHLHYEFLVNGIHKNPRTVELPQAQSLTGKAKETFIANAKQRMEKLERYSQLLYANQ</sequence>
<comment type="function">
    <text evidence="4">Cell wall peptidoglycan (PG) DD-endopeptidase. Hydrolyzes peptide cross-links which covalently connect adjacent PG strands probably to allow insertion of new glycans and thus cell wall expansion. Degrades purified whole PG sacculi in vitro.</text>
</comment>
<comment type="cofactor">
    <cofactor evidence="1">
        <name>Zn(2+)</name>
        <dbReference type="ChEBI" id="CHEBI:29105"/>
    </cofactor>
    <text evidence="1">Binds 1 zinc ion per subunit.</text>
</comment>
<comment type="activity regulation">
    <text evidence="4">Reduced activity in 0.5 mM EDTA and a complete loss of activity at higher EDTA concentrations.</text>
</comment>
<comment type="pathway">
    <text evidence="4">Cell wall degradation; peptidoglycan degradation.</text>
</comment>
<comment type="subcellular location">
    <subcellularLocation>
        <location evidence="8">Cell inner membrane</location>
        <topology evidence="2">Single-pass membrane protein</topology>
        <orientation evidence="8">Periplasmic side</orientation>
    </subcellularLocation>
    <text evidence="3">Localizes to the periphery of the cell and at the midcell in a subset of cells.</text>
</comment>
<comment type="disruption phenotype">
    <text evidence="3 4">Grows as wild-type in LB medium (PubMed:23834664). Synthetically lethal with shyA (PubMed:23834664, PubMed:30782657). ShyC shyB double deletion mutant has no growth or shape defect in LB medium (PubMed:23834664).</text>
</comment>
<comment type="similarity">
    <text evidence="7">Belongs to the peptidase M23B family.</text>
</comment>
<dbReference type="EC" id="3.4.24.-" evidence="4"/>
<dbReference type="EMBL" id="AE003852">
    <property type="protein sequence ID" value="AAF93796.1"/>
    <property type="molecule type" value="Genomic_DNA"/>
</dbReference>
<dbReference type="PIR" id="F82298">
    <property type="entry name" value="F82298"/>
</dbReference>
<dbReference type="RefSeq" id="NP_230279.1">
    <property type="nucleotide sequence ID" value="NC_002505.1"/>
</dbReference>
<dbReference type="RefSeq" id="WP_000949650.1">
    <property type="nucleotide sequence ID" value="NZ_LT906614.1"/>
</dbReference>
<dbReference type="STRING" id="243277.VC_0630"/>
<dbReference type="DNASU" id="2615418"/>
<dbReference type="EnsemblBacteria" id="AAF93796">
    <property type="protein sequence ID" value="AAF93796"/>
    <property type="gene ID" value="VC_0630"/>
</dbReference>
<dbReference type="KEGG" id="vch:VC_0630"/>
<dbReference type="PATRIC" id="fig|243277.26.peg.600"/>
<dbReference type="eggNOG" id="COG0739">
    <property type="taxonomic scope" value="Bacteria"/>
</dbReference>
<dbReference type="HOGENOM" id="CLU_026846_0_1_6"/>
<dbReference type="UniPathway" id="UPA00549"/>
<dbReference type="Proteomes" id="UP000000584">
    <property type="component" value="Chromosome 1"/>
</dbReference>
<dbReference type="GO" id="GO:0005886">
    <property type="term" value="C:plasma membrane"/>
    <property type="evidence" value="ECO:0007669"/>
    <property type="project" value="UniProtKB-SubCell"/>
</dbReference>
<dbReference type="GO" id="GO:0004222">
    <property type="term" value="F:metalloendopeptidase activity"/>
    <property type="evidence" value="ECO:0000318"/>
    <property type="project" value="GO_Central"/>
</dbReference>
<dbReference type="CDD" id="cd12797">
    <property type="entry name" value="M23_peptidase"/>
    <property type="match status" value="1"/>
</dbReference>
<dbReference type="FunFam" id="3.10.450.350:FF:000010">
    <property type="entry name" value="Membrane protein"/>
    <property type="match status" value="1"/>
</dbReference>
<dbReference type="FunFam" id="2.70.70.10:FF:000002">
    <property type="entry name" value="Murein DD-endopeptidase MepM"/>
    <property type="match status" value="1"/>
</dbReference>
<dbReference type="Gene3D" id="3.10.450.350">
    <property type="match status" value="2"/>
</dbReference>
<dbReference type="Gene3D" id="2.70.70.10">
    <property type="entry name" value="Glucose Permease (Domain IIA)"/>
    <property type="match status" value="1"/>
</dbReference>
<dbReference type="InterPro" id="IPR050570">
    <property type="entry name" value="Cell_wall_metabolism_enzyme"/>
</dbReference>
<dbReference type="InterPro" id="IPR045834">
    <property type="entry name" value="Csd3_N2"/>
</dbReference>
<dbReference type="InterPro" id="IPR011055">
    <property type="entry name" value="Dup_hybrid_motif"/>
</dbReference>
<dbReference type="InterPro" id="IPR013731">
    <property type="entry name" value="OapA_N"/>
</dbReference>
<dbReference type="InterPro" id="IPR016047">
    <property type="entry name" value="Peptidase_M23"/>
</dbReference>
<dbReference type="PANTHER" id="PTHR21666:SF288">
    <property type="entry name" value="CELL DIVISION PROTEIN YTFB"/>
    <property type="match status" value="1"/>
</dbReference>
<dbReference type="PANTHER" id="PTHR21666">
    <property type="entry name" value="PEPTIDASE-RELATED"/>
    <property type="match status" value="1"/>
</dbReference>
<dbReference type="Pfam" id="PF19425">
    <property type="entry name" value="Csd3_N2"/>
    <property type="match status" value="1"/>
</dbReference>
<dbReference type="Pfam" id="PF08525">
    <property type="entry name" value="OapA_N"/>
    <property type="match status" value="1"/>
</dbReference>
<dbReference type="Pfam" id="PF01551">
    <property type="entry name" value="Peptidase_M23"/>
    <property type="match status" value="1"/>
</dbReference>
<dbReference type="SUPFAM" id="SSF51261">
    <property type="entry name" value="Duplicated hybrid motif"/>
    <property type="match status" value="1"/>
</dbReference>
<feature type="chain" id="PRO_0000462119" description="Peptidoglycan DD-endopeptidase ShyC">
    <location>
        <begin position="1"/>
        <end position="433"/>
    </location>
</feature>
<feature type="transmembrane region" description="Helical" evidence="2">
    <location>
        <begin position="10"/>
        <end position="30"/>
    </location>
</feature>
<feature type="binding site" evidence="1">
    <location>
        <position position="299"/>
    </location>
    <ligand>
        <name>Zn(2+)</name>
        <dbReference type="ChEBI" id="CHEBI:29105"/>
        <note>catalytic</note>
    </ligand>
</feature>
<feature type="binding site" evidence="1">
    <location>
        <position position="303"/>
    </location>
    <ligand>
        <name>Zn(2+)</name>
        <dbReference type="ChEBI" id="CHEBI:29105"/>
        <note>catalytic</note>
    </ligand>
</feature>
<feature type="binding site" evidence="1">
    <location>
        <position position="380"/>
    </location>
    <ligand>
        <name>Zn(2+)</name>
        <dbReference type="ChEBI" id="CHEBI:29105"/>
        <note>catalytic</note>
    </ligand>
</feature>